<accession>P19757</accession>
<organism>
    <name type="scientific">Sus scrofa</name>
    <name type="common">Pig</name>
    <dbReference type="NCBI Taxonomy" id="9823"/>
    <lineage>
        <taxon>Eukaryota</taxon>
        <taxon>Metazoa</taxon>
        <taxon>Chordata</taxon>
        <taxon>Craniata</taxon>
        <taxon>Vertebrata</taxon>
        <taxon>Euteleostomi</taxon>
        <taxon>Mammalia</taxon>
        <taxon>Eutheria</taxon>
        <taxon>Laurasiatheria</taxon>
        <taxon>Artiodactyla</taxon>
        <taxon>Suina</taxon>
        <taxon>Suidae</taxon>
        <taxon>Sus</taxon>
    </lineage>
</organism>
<protein>
    <recommendedName>
        <fullName>Protamine-2</fullName>
    </recommendedName>
    <alternativeName>
        <fullName>Sperm histone P2</fullName>
    </alternativeName>
    <alternativeName>
        <fullName>Sperm protamine P2</fullName>
    </alternativeName>
</protein>
<reference key="1">
    <citation type="journal article" date="1990" name="Nucleic Acids Res.">
        <title>The lack of protamine 2 (P2) in boar and bull spermatozoa is due to mutations within the P2 gene.</title>
        <authorList>
            <person name="Maier W.-M."/>
            <person name="Nussbaum G."/>
            <person name="Domenjoud L."/>
            <person name="Klemm U."/>
            <person name="Engel W."/>
        </authorList>
    </citation>
    <scope>NUCLEOTIDE SEQUENCE [MRNA]</scope>
    <source>
        <tissue>Testis</tissue>
    </source>
</reference>
<reference key="2">
    <citation type="journal article" date="1992" name="Biol. Chem. Hoppe-Seyler">
        <title>Characterization of four genes encoding basic proteins of the porcine spermatid nucleus and close linkage of three of them.</title>
        <authorList>
            <person name="Keime S."/>
            <person name="Heitland K."/>
            <person name="Kumm S."/>
            <person name="Schloesser M."/>
            <person name="Hroch N."/>
            <person name="Holtz W."/>
            <person name="Engel W."/>
        </authorList>
    </citation>
    <scope>NUCLEOTIDE SEQUENCE [GENOMIC DNA]</scope>
</reference>
<feature type="chain" id="PRO_0000191610" description="Protamine-2">
    <location>
        <begin position="1"/>
        <end position="92"/>
    </location>
</feature>
<feature type="region of interest" description="Disordered" evidence="3">
    <location>
        <begin position="1"/>
        <end position="76"/>
    </location>
</feature>
<feature type="compositionally biased region" description="Low complexity" evidence="3">
    <location>
        <begin position="7"/>
        <end position="20"/>
    </location>
</feature>
<feature type="compositionally biased region" description="Basic and acidic residues" evidence="3">
    <location>
        <begin position="21"/>
        <end position="36"/>
    </location>
</feature>
<feature type="compositionally biased region" description="Basic residues" evidence="3">
    <location>
        <begin position="42"/>
        <end position="76"/>
    </location>
</feature>
<feature type="modified residue" description="Phosphoserine" evidence="2">
    <location>
        <position position="8"/>
    </location>
</feature>
<feature type="modified residue" description="Phosphoserine" evidence="2">
    <location>
        <position position="10"/>
    </location>
</feature>
<feature type="sequence conflict" description="In Ref. 2." evidence="4" ref="2">
    <original>R</original>
    <variation>S</variation>
    <location>
        <position position="64"/>
    </location>
</feature>
<feature type="sequence conflict" description="In Ref. 2." evidence="4" ref="2">
    <location>
        <position position="68"/>
    </location>
</feature>
<feature type="sequence conflict" description="In Ref. 2." evidence="4" ref="2">
    <original>R</original>
    <variation>W</variation>
    <location>
        <position position="74"/>
    </location>
</feature>
<gene>
    <name type="primary">PRM2</name>
</gene>
<evidence type="ECO:0000250" key="1">
    <source>
        <dbReference type="UniProtKB" id="P07978"/>
    </source>
</evidence>
<evidence type="ECO:0000250" key="2">
    <source>
        <dbReference type="UniProtKB" id="P11248"/>
    </source>
</evidence>
<evidence type="ECO:0000256" key="3">
    <source>
        <dbReference type="SAM" id="MobiDB-lite"/>
    </source>
</evidence>
<evidence type="ECO:0000305" key="4"/>
<proteinExistence type="evidence at transcript level"/>
<dbReference type="EMBL" id="X16558">
    <property type="protein sequence ID" value="CAA34557.1"/>
    <property type="molecule type" value="mRNA"/>
</dbReference>
<dbReference type="EMBL" id="M80676">
    <property type="status" value="NOT_ANNOTATED_CDS"/>
    <property type="molecule type" value="Genomic_DNA"/>
</dbReference>
<dbReference type="PIR" id="S13132">
    <property type="entry name" value="S13132"/>
</dbReference>
<dbReference type="RefSeq" id="NP_999417.1">
    <property type="nucleotide sequence ID" value="NM_214252.1"/>
</dbReference>
<dbReference type="STRING" id="9823.ENSSSCP00000024012"/>
<dbReference type="PaxDb" id="9823-ENSSSCP00000024012"/>
<dbReference type="PeptideAtlas" id="P19757"/>
<dbReference type="Ensembl" id="ENSSSCT00015071908.1">
    <property type="protein sequence ID" value="ENSSSCP00015028844.1"/>
    <property type="gene ID" value="ENSSSCG00015053982.1"/>
</dbReference>
<dbReference type="GeneID" id="397486"/>
<dbReference type="KEGG" id="ssc:397486"/>
<dbReference type="CTD" id="5620"/>
<dbReference type="eggNOG" id="ENOG502TD5P">
    <property type="taxonomic scope" value="Eukaryota"/>
</dbReference>
<dbReference type="HOGENOM" id="CLU_175685_0_0_1"/>
<dbReference type="InParanoid" id="P19757"/>
<dbReference type="Proteomes" id="UP000008227">
    <property type="component" value="Unplaced"/>
</dbReference>
<dbReference type="Proteomes" id="UP000314985">
    <property type="component" value="Unplaced"/>
</dbReference>
<dbReference type="Proteomes" id="UP000694570">
    <property type="component" value="Unplaced"/>
</dbReference>
<dbReference type="Proteomes" id="UP000694571">
    <property type="component" value="Unplaced"/>
</dbReference>
<dbReference type="Proteomes" id="UP000694720">
    <property type="component" value="Unplaced"/>
</dbReference>
<dbReference type="Proteomes" id="UP000694722">
    <property type="component" value="Unplaced"/>
</dbReference>
<dbReference type="Proteomes" id="UP000694723">
    <property type="component" value="Unplaced"/>
</dbReference>
<dbReference type="Proteomes" id="UP000694724">
    <property type="component" value="Unplaced"/>
</dbReference>
<dbReference type="Proteomes" id="UP000694725">
    <property type="component" value="Unplaced"/>
</dbReference>
<dbReference type="Proteomes" id="UP000694726">
    <property type="component" value="Unplaced"/>
</dbReference>
<dbReference type="Proteomes" id="UP000694727">
    <property type="component" value="Unplaced"/>
</dbReference>
<dbReference type="Proteomes" id="UP000694728">
    <property type="component" value="Unplaced"/>
</dbReference>
<dbReference type="GO" id="GO:0000786">
    <property type="term" value="C:nucleosome"/>
    <property type="evidence" value="ECO:0007669"/>
    <property type="project" value="UniProtKB-KW"/>
</dbReference>
<dbReference type="GO" id="GO:0005634">
    <property type="term" value="C:nucleus"/>
    <property type="evidence" value="ECO:0000314"/>
    <property type="project" value="MGI"/>
</dbReference>
<dbReference type="GO" id="GO:0003677">
    <property type="term" value="F:DNA binding"/>
    <property type="evidence" value="ECO:0007669"/>
    <property type="project" value="UniProtKB-KW"/>
</dbReference>
<dbReference type="GO" id="GO:0030261">
    <property type="term" value="P:chromosome condensation"/>
    <property type="evidence" value="ECO:0007669"/>
    <property type="project" value="UniProtKB-KW"/>
</dbReference>
<dbReference type="GO" id="GO:0006997">
    <property type="term" value="P:nucleus organization"/>
    <property type="evidence" value="ECO:0000318"/>
    <property type="project" value="GO_Central"/>
</dbReference>
<dbReference type="GO" id="GO:0007286">
    <property type="term" value="P:spermatid development"/>
    <property type="evidence" value="ECO:0000318"/>
    <property type="project" value="GO_Central"/>
</dbReference>
<dbReference type="GO" id="GO:0007283">
    <property type="term" value="P:spermatogenesis"/>
    <property type="evidence" value="ECO:0000250"/>
    <property type="project" value="UniProtKB"/>
</dbReference>
<dbReference type="InterPro" id="IPR000492">
    <property type="entry name" value="PRM2"/>
</dbReference>
<dbReference type="PANTHER" id="PTHR21341">
    <property type="entry name" value="PROTAMINE-2"/>
    <property type="match status" value="1"/>
</dbReference>
<dbReference type="PANTHER" id="PTHR21341:SF2">
    <property type="entry name" value="PROTAMINE-2"/>
    <property type="match status" value="1"/>
</dbReference>
<dbReference type="Pfam" id="PF00841">
    <property type="entry name" value="Protamine_P2"/>
    <property type="match status" value="1"/>
</dbReference>
<sequence>MVRCRVRSPSESPQQGSGQQRENERQDQDQELRPEDVPVYGRTHRGRYHYRHRSHTRRRRSCRRRRRRACRHRRHRRGCRRIRRRRRCRRRL</sequence>
<name>PRM2_PIG</name>
<comment type="function">
    <text evidence="1">Protamines substitute for histones in the chromatin of sperm during the haploid phase of spermatogenesis. They compact sperm DNA into a highly condensed, stable and inactive complex.</text>
</comment>
<comment type="subunit">
    <text evidence="1">Interacts with TDRP.</text>
</comment>
<comment type="subcellular location">
    <subcellularLocation>
        <location evidence="1">Nucleus</location>
    </subcellularLocation>
    <subcellularLocation>
        <location evidence="1">Chromosome</location>
    </subcellularLocation>
</comment>
<comment type="tissue specificity">
    <text>Testis.</text>
</comment>
<comment type="PTM">
    <text evidence="1">Proteolytic processing into mature chains is required for histone eviction during spermatogenesis. Transition proteins (TNP1 and TNP2) are required for processing.</text>
</comment>
<comment type="similarity">
    <text evidence="4">Belongs to the protamine P2 family.</text>
</comment>
<keyword id="KW-0158">Chromosome</keyword>
<keyword id="KW-0217">Developmental protein</keyword>
<keyword id="KW-0221">Differentiation</keyword>
<keyword id="KW-0226">DNA condensation</keyword>
<keyword id="KW-0238">DNA-binding</keyword>
<keyword id="KW-0544">Nucleosome core</keyword>
<keyword id="KW-0539">Nucleus</keyword>
<keyword id="KW-0597">Phosphoprotein</keyword>
<keyword id="KW-1185">Reference proteome</keyword>
<keyword id="KW-0744">Spermatogenesis</keyword>